<comment type="function">
    <text evidence="2">Component of the ubiquinol-cytochrome c reductase complex (complex III or cytochrome b-c1 complex) that is part of the mitochondrial respiratory chain. The b-c1 complex mediates electron transfer from ubiquinol to cytochrome c. Contributes to the generation of a proton gradient across the mitochondrial membrane that is then used for ATP synthesis.</text>
</comment>
<comment type="cofactor">
    <cofactor evidence="2">
        <name>heme b</name>
        <dbReference type="ChEBI" id="CHEBI:60344"/>
    </cofactor>
    <text evidence="2">Binds 2 heme b groups non-covalently.</text>
</comment>
<comment type="subunit">
    <text evidence="2">The cytochrome bc1 complex contains 3 respiratory subunits (MT-CYB, CYC1 and UQCRFS1), 2 core proteins (UQCRC1 and UQCRC2) and probably 6 low-molecular weight proteins.</text>
</comment>
<comment type="subcellular location">
    <subcellularLocation>
        <location evidence="2">Mitochondrion inner membrane</location>
        <topology evidence="2">Multi-pass membrane protein</topology>
    </subcellularLocation>
</comment>
<comment type="miscellaneous">
    <text evidence="1">Heme 1 (or BL or b562) is low-potential and absorbs at about 562 nm, and heme 2 (or BH or b566) is high-potential and absorbs at about 566 nm.</text>
</comment>
<comment type="similarity">
    <text evidence="3 4">Belongs to the cytochrome b family.</text>
</comment>
<comment type="caution">
    <text evidence="2">The full-length protein contains only eight transmembrane helices, not nine as predicted by bioinformatics tools.</text>
</comment>
<organism>
    <name type="scientific">Amia calva</name>
    <name type="common">Bowfin</name>
    <dbReference type="NCBI Taxonomy" id="7924"/>
    <lineage>
        <taxon>Eukaryota</taxon>
        <taxon>Metazoa</taxon>
        <taxon>Chordata</taxon>
        <taxon>Craniata</taxon>
        <taxon>Vertebrata</taxon>
        <taxon>Euteleostomi</taxon>
        <taxon>Actinopterygii</taxon>
        <taxon>Neopterygii</taxon>
        <taxon>Holostei</taxon>
        <taxon>Amiiformes</taxon>
        <taxon>Amiidae</taxon>
        <taxon>Amia</taxon>
    </lineage>
</organism>
<gene>
    <name type="primary">mt-cyb</name>
    <name type="synonym">cob</name>
    <name type="synonym">cytb</name>
    <name type="synonym">mtcyb</name>
</gene>
<dbReference type="EMBL" id="AB018999">
    <property type="protein sequence ID" value="BAA88877.1"/>
    <property type="molecule type" value="Genomic_DNA"/>
</dbReference>
<dbReference type="EMBL" id="AB042952">
    <property type="protein sequence ID" value="BAB40754.1"/>
    <property type="molecule type" value="Genomic_DNA"/>
</dbReference>
<dbReference type="EMBL" id="M64887">
    <property type="protein sequence ID" value="AAB01439.1"/>
    <property type="molecule type" value="Genomic_DNA"/>
</dbReference>
<dbReference type="RefSeq" id="NP_839823.1">
    <property type="nucleotide sequence ID" value="NC_004742.1"/>
</dbReference>
<dbReference type="SMR" id="P29663"/>
<dbReference type="GeneID" id="807219"/>
<dbReference type="CTD" id="4519"/>
<dbReference type="GO" id="GO:0005743">
    <property type="term" value="C:mitochondrial inner membrane"/>
    <property type="evidence" value="ECO:0007669"/>
    <property type="project" value="UniProtKB-SubCell"/>
</dbReference>
<dbReference type="GO" id="GO:0045275">
    <property type="term" value="C:respiratory chain complex III"/>
    <property type="evidence" value="ECO:0007669"/>
    <property type="project" value="InterPro"/>
</dbReference>
<dbReference type="GO" id="GO:0046872">
    <property type="term" value="F:metal ion binding"/>
    <property type="evidence" value="ECO:0007669"/>
    <property type="project" value="UniProtKB-KW"/>
</dbReference>
<dbReference type="GO" id="GO:0008121">
    <property type="term" value="F:ubiquinol-cytochrome-c reductase activity"/>
    <property type="evidence" value="ECO:0007669"/>
    <property type="project" value="InterPro"/>
</dbReference>
<dbReference type="GO" id="GO:0006122">
    <property type="term" value="P:mitochondrial electron transport, ubiquinol to cytochrome c"/>
    <property type="evidence" value="ECO:0007669"/>
    <property type="project" value="TreeGrafter"/>
</dbReference>
<dbReference type="CDD" id="cd00290">
    <property type="entry name" value="cytochrome_b_C"/>
    <property type="match status" value="1"/>
</dbReference>
<dbReference type="CDD" id="cd00284">
    <property type="entry name" value="Cytochrome_b_N"/>
    <property type="match status" value="1"/>
</dbReference>
<dbReference type="FunFam" id="1.20.810.10:FF:000002">
    <property type="entry name" value="Cytochrome b"/>
    <property type="match status" value="1"/>
</dbReference>
<dbReference type="Gene3D" id="1.20.810.10">
    <property type="entry name" value="Cytochrome Bc1 Complex, Chain C"/>
    <property type="match status" value="1"/>
</dbReference>
<dbReference type="InterPro" id="IPR005798">
    <property type="entry name" value="Cyt_b/b6_C"/>
</dbReference>
<dbReference type="InterPro" id="IPR036150">
    <property type="entry name" value="Cyt_b/b6_C_sf"/>
</dbReference>
<dbReference type="InterPro" id="IPR005797">
    <property type="entry name" value="Cyt_b/b6_N"/>
</dbReference>
<dbReference type="InterPro" id="IPR027387">
    <property type="entry name" value="Cytb/b6-like_sf"/>
</dbReference>
<dbReference type="InterPro" id="IPR030689">
    <property type="entry name" value="Cytochrome_b"/>
</dbReference>
<dbReference type="InterPro" id="IPR048260">
    <property type="entry name" value="Cytochrome_b_C_euk/bac"/>
</dbReference>
<dbReference type="InterPro" id="IPR048259">
    <property type="entry name" value="Cytochrome_b_N_euk/bac"/>
</dbReference>
<dbReference type="InterPro" id="IPR016174">
    <property type="entry name" value="Di-haem_cyt_TM"/>
</dbReference>
<dbReference type="PANTHER" id="PTHR19271">
    <property type="entry name" value="CYTOCHROME B"/>
    <property type="match status" value="1"/>
</dbReference>
<dbReference type="PANTHER" id="PTHR19271:SF16">
    <property type="entry name" value="CYTOCHROME B"/>
    <property type="match status" value="1"/>
</dbReference>
<dbReference type="Pfam" id="PF00032">
    <property type="entry name" value="Cytochrom_B_C"/>
    <property type="match status" value="1"/>
</dbReference>
<dbReference type="Pfam" id="PF00033">
    <property type="entry name" value="Cytochrome_B"/>
    <property type="match status" value="1"/>
</dbReference>
<dbReference type="PIRSF" id="PIRSF038885">
    <property type="entry name" value="COB"/>
    <property type="match status" value="1"/>
</dbReference>
<dbReference type="SUPFAM" id="SSF81648">
    <property type="entry name" value="a domain/subunit of cytochrome bc1 complex (Ubiquinol-cytochrome c reductase)"/>
    <property type="match status" value="1"/>
</dbReference>
<dbReference type="SUPFAM" id="SSF81342">
    <property type="entry name" value="Transmembrane di-heme cytochromes"/>
    <property type="match status" value="1"/>
</dbReference>
<dbReference type="PROSITE" id="PS51003">
    <property type="entry name" value="CYTB_CTER"/>
    <property type="match status" value="1"/>
</dbReference>
<dbReference type="PROSITE" id="PS51002">
    <property type="entry name" value="CYTB_NTER"/>
    <property type="match status" value="1"/>
</dbReference>
<keyword id="KW-0249">Electron transport</keyword>
<keyword id="KW-0349">Heme</keyword>
<keyword id="KW-0408">Iron</keyword>
<keyword id="KW-0472">Membrane</keyword>
<keyword id="KW-0479">Metal-binding</keyword>
<keyword id="KW-0496">Mitochondrion</keyword>
<keyword id="KW-0999">Mitochondrion inner membrane</keyword>
<keyword id="KW-0679">Respiratory chain</keyword>
<keyword id="KW-0812">Transmembrane</keyword>
<keyword id="KW-1133">Transmembrane helix</keyword>
<keyword id="KW-0813">Transport</keyword>
<keyword id="KW-0830">Ubiquinone</keyword>
<protein>
    <recommendedName>
        <fullName>Cytochrome b</fullName>
    </recommendedName>
    <alternativeName>
        <fullName>Complex III subunit 3</fullName>
    </alternativeName>
    <alternativeName>
        <fullName>Complex III subunit III</fullName>
    </alternativeName>
    <alternativeName>
        <fullName>Cytochrome b-c1 complex subunit 3</fullName>
    </alternativeName>
    <alternativeName>
        <fullName>Ubiquinol-cytochrome-c reductase complex cytochrome b subunit</fullName>
    </alternativeName>
</protein>
<sequence length="379" mass="42726">MATIRKTHPLISIINGAFIDLPAPVNISVWWNFGSLLGLCLITQIVTGLFLAMHFTSDISLAFSSVAHICRDVNYGWFLRNIHANGASLFFICLYLHIARGLYYGSYLYKETWNVGVVLFLLVMMTAFVGYVLPWGQMSFWGATVITNLLSAFPYIGDTLVQWIWGGFSVDNATLTRFFTFHFLFPFVIAGASMIHLLFLHETGSNNPLGLNSNVDKITFHPYFSYKDLLGFIILLAGLMFLTLFSPNLLGDPENFTPANPLVTPPHIKPEWYFLFAYAILRSIPNKLGGVLALLFSILILMIVPITHTSKQRSSTFRPLTQILFWTLVADMFILTWIGGQPVEHPFIIIGQIASIIYFALFLVFAPLAGWVENKMLSW</sequence>
<accession>P29663</accession>
<accession>Q8HQK9</accession>
<accession>Q9T9I3</accession>
<name>CYB_AMICA</name>
<geneLocation type="mitochondrion"/>
<reference key="1">
    <citation type="book" date="1999" name="The biology of biodiversity">
        <title>Mitochondrial molecular clocks and the origin of euteleostean biodiversity: familial radiation of perciforms may have predated the Cretaceous/Tertiary boundary.</title>
        <editorList>
            <person name="Kato M."/>
        </editorList>
        <authorList>
            <person name="Kumazawa Y."/>
            <person name="Yamaguchi M."/>
            <person name="Nishida M."/>
        </authorList>
    </citation>
    <scope>NUCLEOTIDE SEQUENCE [GENOMIC DNA]</scope>
</reference>
<reference key="2">
    <citation type="journal article" date="2003" name="Mol. Phylogenet. Evol.">
        <title>Basal actinopterygian relationships: a mitogenomic perspective on the phylogeny of the 'ancient fish.'.</title>
        <authorList>
            <person name="Inoue J.G."/>
            <person name="Miya M."/>
            <person name="Tsukamoto K."/>
            <person name="Nishida M."/>
        </authorList>
    </citation>
    <scope>NUCLEOTIDE SEQUENCE [GENOMIC DNA]</scope>
</reference>
<reference key="3">
    <citation type="journal article" date="1991" name="Mol. Biol. Evol.">
        <title>Phylogenetic relationships of neopterygian fishes, inferred from mitochondrial DNA sequences.</title>
        <authorList>
            <person name="Normark B.B."/>
            <person name="McCune A.R."/>
            <person name="Harrison R.G."/>
        </authorList>
    </citation>
    <scope>NUCLEOTIDE SEQUENCE [GENOMIC DNA] OF 33-134</scope>
</reference>
<proteinExistence type="inferred from homology"/>
<feature type="chain" id="PRO_0000060573" description="Cytochrome b">
    <location>
        <begin position="1"/>
        <end position="379"/>
    </location>
</feature>
<feature type="transmembrane region" description="Helical" evidence="2">
    <location>
        <begin position="33"/>
        <end position="53"/>
    </location>
</feature>
<feature type="transmembrane region" description="Helical" evidence="2">
    <location>
        <begin position="77"/>
        <end position="98"/>
    </location>
</feature>
<feature type="transmembrane region" description="Helical" evidence="2">
    <location>
        <begin position="113"/>
        <end position="133"/>
    </location>
</feature>
<feature type="transmembrane region" description="Helical" evidence="2">
    <location>
        <begin position="178"/>
        <end position="198"/>
    </location>
</feature>
<feature type="transmembrane region" description="Helical" evidence="2">
    <location>
        <begin position="226"/>
        <end position="246"/>
    </location>
</feature>
<feature type="transmembrane region" description="Helical" evidence="2">
    <location>
        <begin position="288"/>
        <end position="308"/>
    </location>
</feature>
<feature type="transmembrane region" description="Helical" evidence="2">
    <location>
        <begin position="320"/>
        <end position="340"/>
    </location>
</feature>
<feature type="transmembrane region" description="Helical" evidence="2">
    <location>
        <begin position="347"/>
        <end position="367"/>
    </location>
</feature>
<feature type="binding site" description="axial binding residue" evidence="2">
    <location>
        <position position="83"/>
    </location>
    <ligand>
        <name>heme b</name>
        <dbReference type="ChEBI" id="CHEBI:60344"/>
        <label>b562</label>
    </ligand>
    <ligandPart>
        <name>Fe</name>
        <dbReference type="ChEBI" id="CHEBI:18248"/>
    </ligandPart>
</feature>
<feature type="binding site" description="axial binding residue" evidence="2">
    <location>
        <position position="97"/>
    </location>
    <ligand>
        <name>heme b</name>
        <dbReference type="ChEBI" id="CHEBI:60344"/>
        <label>b566</label>
    </ligand>
    <ligandPart>
        <name>Fe</name>
        <dbReference type="ChEBI" id="CHEBI:18248"/>
    </ligandPart>
</feature>
<feature type="binding site" description="axial binding residue" evidence="2">
    <location>
        <position position="182"/>
    </location>
    <ligand>
        <name>heme b</name>
        <dbReference type="ChEBI" id="CHEBI:60344"/>
        <label>b562</label>
    </ligand>
    <ligandPart>
        <name>Fe</name>
        <dbReference type="ChEBI" id="CHEBI:18248"/>
    </ligandPart>
</feature>
<feature type="binding site" description="axial binding residue" evidence="2">
    <location>
        <position position="196"/>
    </location>
    <ligand>
        <name>heme b</name>
        <dbReference type="ChEBI" id="CHEBI:60344"/>
        <label>b566</label>
    </ligand>
    <ligandPart>
        <name>Fe</name>
        <dbReference type="ChEBI" id="CHEBI:18248"/>
    </ligandPart>
</feature>
<feature type="binding site" evidence="2">
    <location>
        <position position="201"/>
    </location>
    <ligand>
        <name>a ubiquinone</name>
        <dbReference type="ChEBI" id="CHEBI:16389"/>
    </ligand>
</feature>
<feature type="sequence conflict" description="In Ref. 2; BAB40754." evidence="5" ref="2">
    <original>T</original>
    <variation>A</variation>
    <location>
        <position position="243"/>
    </location>
</feature>
<evidence type="ECO:0000250" key="1"/>
<evidence type="ECO:0000250" key="2">
    <source>
        <dbReference type="UniProtKB" id="P00157"/>
    </source>
</evidence>
<evidence type="ECO:0000255" key="3">
    <source>
        <dbReference type="PROSITE-ProRule" id="PRU00967"/>
    </source>
</evidence>
<evidence type="ECO:0000255" key="4">
    <source>
        <dbReference type="PROSITE-ProRule" id="PRU00968"/>
    </source>
</evidence>
<evidence type="ECO:0000305" key="5"/>